<reference key="1">
    <citation type="journal article" date="2006" name="J. Bacteriol.">
        <title>Complete genome sequence of Yersinia pestis strains Antiqua and Nepal516: evidence of gene reduction in an emerging pathogen.</title>
        <authorList>
            <person name="Chain P.S.G."/>
            <person name="Hu P."/>
            <person name="Malfatti S.A."/>
            <person name="Radnedge L."/>
            <person name="Larimer F."/>
            <person name="Vergez L.M."/>
            <person name="Worsham P."/>
            <person name="Chu M.C."/>
            <person name="Andersen G.L."/>
        </authorList>
    </citation>
    <scope>NUCLEOTIDE SEQUENCE [LARGE SCALE GENOMIC DNA]</scope>
    <source>
        <strain>Nepal516</strain>
    </source>
</reference>
<reference key="2">
    <citation type="submission" date="2009-04" db="EMBL/GenBank/DDBJ databases">
        <title>Yersinia pestis Nepal516A whole genome shotgun sequencing project.</title>
        <authorList>
            <person name="Plunkett G. III"/>
            <person name="Anderson B.D."/>
            <person name="Baumler D.J."/>
            <person name="Burland V."/>
            <person name="Cabot E.L."/>
            <person name="Glasner J.D."/>
            <person name="Mau B."/>
            <person name="Neeno-Eckwall E."/>
            <person name="Perna N.T."/>
            <person name="Munk A.C."/>
            <person name="Tapia R."/>
            <person name="Green L.D."/>
            <person name="Rogers Y.C."/>
            <person name="Detter J.C."/>
            <person name="Bruce D.C."/>
            <person name="Brettin T.S."/>
        </authorList>
    </citation>
    <scope>NUCLEOTIDE SEQUENCE [LARGE SCALE GENOMIC DNA]</scope>
    <source>
        <strain>Nepal516</strain>
    </source>
</reference>
<feature type="chain" id="PRO_1000064259" description="Protein TsgA homolog">
    <location>
        <begin position="1"/>
        <end position="394"/>
    </location>
</feature>
<feature type="transmembrane region" description="Helical" evidence="1">
    <location>
        <begin position="11"/>
        <end position="31"/>
    </location>
</feature>
<feature type="transmembrane region" description="Helical" evidence="1">
    <location>
        <begin position="51"/>
        <end position="71"/>
    </location>
</feature>
<feature type="transmembrane region" description="Helical" evidence="1">
    <location>
        <begin position="76"/>
        <end position="96"/>
    </location>
</feature>
<feature type="transmembrane region" description="Helical" evidence="1">
    <location>
        <begin position="101"/>
        <end position="121"/>
    </location>
</feature>
<feature type="transmembrane region" description="Helical" evidence="1">
    <location>
        <begin position="134"/>
        <end position="154"/>
    </location>
</feature>
<feature type="transmembrane region" description="Helical" evidence="1">
    <location>
        <begin position="162"/>
        <end position="182"/>
    </location>
</feature>
<feature type="transmembrane region" description="Helical" evidence="1">
    <location>
        <begin position="206"/>
        <end position="226"/>
    </location>
</feature>
<feature type="transmembrane region" description="Helical" evidence="1">
    <location>
        <begin position="246"/>
        <end position="266"/>
    </location>
</feature>
<feature type="transmembrane region" description="Helical" evidence="1">
    <location>
        <begin position="274"/>
        <end position="294"/>
    </location>
</feature>
<feature type="transmembrane region" description="Helical" evidence="1">
    <location>
        <begin position="302"/>
        <end position="322"/>
    </location>
</feature>
<feature type="transmembrane region" description="Helical" evidence="1">
    <location>
        <begin position="334"/>
        <end position="354"/>
    </location>
</feature>
<feature type="transmembrane region" description="Helical" evidence="1">
    <location>
        <begin position="363"/>
        <end position="383"/>
    </location>
</feature>
<protein>
    <recommendedName>
        <fullName evidence="1">Protein TsgA homolog</fullName>
    </recommendedName>
</protein>
<gene>
    <name evidence="1" type="primary">tsgA</name>
    <name type="ordered locus">YPN_3901</name>
    <name type="ORF">YP516_4429</name>
</gene>
<organism>
    <name type="scientific">Yersinia pestis bv. Antiqua (strain Nepal516)</name>
    <dbReference type="NCBI Taxonomy" id="377628"/>
    <lineage>
        <taxon>Bacteria</taxon>
        <taxon>Pseudomonadati</taxon>
        <taxon>Pseudomonadota</taxon>
        <taxon>Gammaproteobacteria</taxon>
        <taxon>Enterobacterales</taxon>
        <taxon>Yersiniaceae</taxon>
        <taxon>Yersinia</taxon>
    </lineage>
</organism>
<evidence type="ECO:0000255" key="1">
    <source>
        <dbReference type="HAMAP-Rule" id="MF_01044"/>
    </source>
</evidence>
<name>TSGA_YERPN</name>
<dbReference type="EMBL" id="CP000305">
    <property type="protein sequence ID" value="ABG20228.1"/>
    <property type="molecule type" value="Genomic_DNA"/>
</dbReference>
<dbReference type="EMBL" id="ACNQ01000019">
    <property type="protein sequence ID" value="EEO74819.1"/>
    <property type="molecule type" value="Genomic_DNA"/>
</dbReference>
<dbReference type="RefSeq" id="WP_002215690.1">
    <property type="nucleotide sequence ID" value="NZ_ACNQ01000019.1"/>
</dbReference>
<dbReference type="SMR" id="Q1CCQ2"/>
<dbReference type="GeneID" id="57974438"/>
<dbReference type="KEGG" id="ypn:YPN_3901"/>
<dbReference type="HOGENOM" id="CLU_056916_0_0_6"/>
<dbReference type="Proteomes" id="UP000008936">
    <property type="component" value="Chromosome"/>
</dbReference>
<dbReference type="GO" id="GO:0005886">
    <property type="term" value="C:plasma membrane"/>
    <property type="evidence" value="ECO:0007669"/>
    <property type="project" value="UniProtKB-SubCell"/>
</dbReference>
<dbReference type="GO" id="GO:0022857">
    <property type="term" value="F:transmembrane transporter activity"/>
    <property type="evidence" value="ECO:0007669"/>
    <property type="project" value="InterPro"/>
</dbReference>
<dbReference type="Gene3D" id="1.20.1250.20">
    <property type="entry name" value="MFS general substrate transporter like domains"/>
    <property type="match status" value="2"/>
</dbReference>
<dbReference type="HAMAP" id="MF_01044">
    <property type="entry name" value="MFS_TsgA"/>
    <property type="match status" value="1"/>
</dbReference>
<dbReference type="InterPro" id="IPR011701">
    <property type="entry name" value="MFS"/>
</dbReference>
<dbReference type="InterPro" id="IPR020846">
    <property type="entry name" value="MFS_dom"/>
</dbReference>
<dbReference type="InterPro" id="IPR036259">
    <property type="entry name" value="MFS_trans_sf"/>
</dbReference>
<dbReference type="InterPro" id="IPR023528">
    <property type="entry name" value="MFS_TsgA"/>
</dbReference>
<dbReference type="InterPro" id="IPR050375">
    <property type="entry name" value="MFS_TsgA-like"/>
</dbReference>
<dbReference type="NCBIfam" id="NF002982">
    <property type="entry name" value="PRK03699.1"/>
    <property type="match status" value="1"/>
</dbReference>
<dbReference type="PANTHER" id="PTHR43702">
    <property type="entry name" value="L-FUCOSE-PROTON SYMPORTER"/>
    <property type="match status" value="1"/>
</dbReference>
<dbReference type="PANTHER" id="PTHR43702:SF3">
    <property type="entry name" value="PROTEIN TSGA"/>
    <property type="match status" value="1"/>
</dbReference>
<dbReference type="Pfam" id="PF07690">
    <property type="entry name" value="MFS_1"/>
    <property type="match status" value="1"/>
</dbReference>
<dbReference type="SUPFAM" id="SSF103473">
    <property type="entry name" value="MFS general substrate transporter"/>
    <property type="match status" value="1"/>
</dbReference>
<dbReference type="PROSITE" id="PS50850">
    <property type="entry name" value="MFS"/>
    <property type="match status" value="1"/>
</dbReference>
<sequence>MNNSNRIRLTWISYLSYALTGALVIVTGIVMGNIAEYFNLPIASMSNTFTFLNAGILISIFLNAWLMEIIPLKRQLVFGFILMLIAIAGLMVGHNLMIFSISMFIFGVVSGITMSIGTFLVTHMYEGRQRGSRLLFTDSFFSMAGMIFPIAAAMLLARHIEWYWVYACIGLLYVGIFVLTLCSEFPVLGHKATDQSKPVVKEKWGVGVLFLAIAALCYILGQLGFIQWVPEYATKTFNMNISQAGQLVSNFWISYMIGMWIFSFILRFFDLQRIVTVLAAMATLAMYLFVSTDNPAYLSYYILALGFVSSAIYTTLITLGSLQTKVSSPKLVNFILTCGTVGTMLTFVVTGPIVANNGVHAALETANGLYLAVFILCLALGFFTKHRSHGHVTH</sequence>
<proteinExistence type="inferred from homology"/>
<comment type="subcellular location">
    <subcellularLocation>
        <location evidence="1">Cell inner membrane</location>
        <topology evidence="1">Multi-pass membrane protein</topology>
    </subcellularLocation>
</comment>
<comment type="similarity">
    <text evidence="1">Belongs to the major facilitator superfamily. TsgA family.</text>
</comment>
<keyword id="KW-0997">Cell inner membrane</keyword>
<keyword id="KW-1003">Cell membrane</keyword>
<keyword id="KW-0472">Membrane</keyword>
<keyword id="KW-0812">Transmembrane</keyword>
<keyword id="KW-1133">Transmembrane helix</keyword>
<accession>Q1CCQ2</accession>
<accession>D1Q2R6</accession>